<comment type="function">
    <text evidence="6">Putative GTPase-activating protein.</text>
</comment>
<comment type="similarity">
    <text evidence="6">Belongs to the centaurin gamma-like family.</text>
</comment>
<comment type="sequence caution" evidence="6">
    <conflict type="erroneous initiation">
        <sequence resource="EMBL-CDS" id="BAB85561"/>
    </conflict>
</comment>
<accession>Q8TF27</accession>
<accession>B9EIP7</accession>
<accession>D3DWE4</accession>
<organism>
    <name type="scientific">Homo sapiens</name>
    <name type="common">Human</name>
    <dbReference type="NCBI Taxonomy" id="9606"/>
    <lineage>
        <taxon>Eukaryota</taxon>
        <taxon>Metazoa</taxon>
        <taxon>Chordata</taxon>
        <taxon>Craniata</taxon>
        <taxon>Vertebrata</taxon>
        <taxon>Euteleostomi</taxon>
        <taxon>Mammalia</taxon>
        <taxon>Eutheria</taxon>
        <taxon>Euarchontoglires</taxon>
        <taxon>Primates</taxon>
        <taxon>Haplorrhini</taxon>
        <taxon>Catarrhini</taxon>
        <taxon>Hominidae</taxon>
        <taxon>Homo</taxon>
    </lineage>
</organism>
<reference key="1">
    <citation type="journal article" date="2001" name="DNA Res.">
        <title>Prediction of the coding sequences of unidentified human genes. XXII. The complete sequences of 50 new cDNA clones which code for large proteins.</title>
        <authorList>
            <person name="Nagase T."/>
            <person name="Kikuno R."/>
            <person name="Ohara O."/>
        </authorList>
    </citation>
    <scope>NUCLEOTIDE SEQUENCE [LARGE SCALE MRNA]</scope>
    <source>
        <tissue>Brain</tissue>
    </source>
</reference>
<reference key="2">
    <citation type="submission" date="2005-09" db="EMBL/GenBank/DDBJ databases">
        <authorList>
            <person name="Mural R.J."/>
            <person name="Istrail S."/>
            <person name="Sutton G.G."/>
            <person name="Florea L."/>
            <person name="Halpern A.L."/>
            <person name="Mobarry C.M."/>
            <person name="Lippert R."/>
            <person name="Walenz B."/>
            <person name="Shatkay H."/>
            <person name="Dew I."/>
            <person name="Miller J.R."/>
            <person name="Flanigan M.J."/>
            <person name="Edwards N.J."/>
            <person name="Bolanos R."/>
            <person name="Fasulo D."/>
            <person name="Halldorsson B.V."/>
            <person name="Hannenhalli S."/>
            <person name="Turner R."/>
            <person name="Yooseph S."/>
            <person name="Lu F."/>
            <person name="Nusskern D.R."/>
            <person name="Shue B.C."/>
            <person name="Zheng X.H."/>
            <person name="Zhong F."/>
            <person name="Delcher A.L."/>
            <person name="Huson D.H."/>
            <person name="Kravitz S.A."/>
            <person name="Mouchard L."/>
            <person name="Reinert K."/>
            <person name="Remington K.A."/>
            <person name="Clark A.G."/>
            <person name="Waterman M.S."/>
            <person name="Eichler E.E."/>
            <person name="Adams M.D."/>
            <person name="Hunkapiller M.W."/>
            <person name="Myers E.W."/>
            <person name="Venter J.C."/>
        </authorList>
    </citation>
    <scope>NUCLEOTIDE SEQUENCE [LARGE SCALE GENOMIC DNA]</scope>
    <scope>VARIANT VAL-82</scope>
</reference>
<reference key="3">
    <citation type="journal article" date="2004" name="Genome Res.">
        <title>The status, quality, and expansion of the NIH full-length cDNA project: the Mammalian Gene Collection (MGC).</title>
        <authorList>
            <consortium name="The MGC Project Team"/>
        </authorList>
    </citation>
    <scope>NUCLEOTIDE SEQUENCE [LARGE SCALE MRNA]</scope>
    <scope>VARIANT VAL-82</scope>
    <source>
        <tissue>Lung</tissue>
    </source>
</reference>
<keyword id="KW-0040">ANK repeat</keyword>
<keyword id="KW-0343">GTPase activation</keyword>
<keyword id="KW-0479">Metal-binding</keyword>
<keyword id="KW-1185">Reference proteome</keyword>
<keyword id="KW-0677">Repeat</keyword>
<keyword id="KW-0862">Zinc</keyword>
<keyword id="KW-0863">Zinc-finger</keyword>
<protein>
    <recommendedName>
        <fullName>Arf-GAP with GTPase, ANK repeat and PH domain-containing protein 11</fullName>
        <shortName>AGAP-11</shortName>
    </recommendedName>
    <alternativeName>
        <fullName>Centaurin-gamma-like protein KIAA1975</fullName>
    </alternativeName>
</protein>
<dbReference type="EMBL" id="AL136982">
    <property type="status" value="NOT_ANNOTATED_CDS"/>
    <property type="molecule type" value="Genomic_DNA"/>
</dbReference>
<dbReference type="EMBL" id="AB075855">
    <property type="protein sequence ID" value="BAB85561.1"/>
    <property type="status" value="ALT_INIT"/>
    <property type="molecule type" value="mRNA"/>
</dbReference>
<dbReference type="EMBL" id="CH471142">
    <property type="protein sequence ID" value="EAW80308.1"/>
    <property type="molecule type" value="Genomic_DNA"/>
</dbReference>
<dbReference type="EMBL" id="CH471142">
    <property type="protein sequence ID" value="EAW80307.1"/>
    <property type="molecule type" value="Genomic_DNA"/>
</dbReference>
<dbReference type="EMBL" id="CH471142">
    <property type="protein sequence ID" value="EAW80310.1"/>
    <property type="molecule type" value="Genomic_DNA"/>
</dbReference>
<dbReference type="EMBL" id="CH471142">
    <property type="protein sequence ID" value="EAW80311.1"/>
    <property type="molecule type" value="Genomic_DNA"/>
</dbReference>
<dbReference type="EMBL" id="BC140762">
    <property type="protein sequence ID" value="AAI40763.1"/>
    <property type="molecule type" value="mRNA"/>
</dbReference>
<dbReference type="RefSeq" id="NP_597704.1">
    <property type="nucleotide sequence ID" value="NM_133447.1"/>
</dbReference>
<dbReference type="SMR" id="Q8TF27"/>
<dbReference type="BioGRID" id="125637">
    <property type="interactions" value="5"/>
</dbReference>
<dbReference type="FunCoup" id="Q8TF27">
    <property type="interactions" value="5"/>
</dbReference>
<dbReference type="IntAct" id="Q8TF27">
    <property type="interactions" value="2"/>
</dbReference>
<dbReference type="MINT" id="Q8TF27"/>
<dbReference type="iPTMnet" id="Q8TF27"/>
<dbReference type="PhosphoSitePlus" id="Q8TF27"/>
<dbReference type="BioMuta" id="HGNC:29421"/>
<dbReference type="DMDM" id="182641995"/>
<dbReference type="jPOST" id="Q8TF27"/>
<dbReference type="MassIVE" id="Q8TF27"/>
<dbReference type="PeptideAtlas" id="Q8TF27"/>
<dbReference type="ProteomicsDB" id="74544"/>
<dbReference type="DNASU" id="119385"/>
<dbReference type="AGR" id="HGNC:29421"/>
<dbReference type="GeneCards" id="AGAP11"/>
<dbReference type="HGNC" id="HGNC:29421">
    <property type="gene designation" value="AGAP11"/>
</dbReference>
<dbReference type="neXtProt" id="NX_Q8TF27"/>
<dbReference type="PharmGKB" id="PA164715011"/>
<dbReference type="InParanoid" id="Q8TF27"/>
<dbReference type="PAN-GO" id="Q8TF27">
    <property type="GO annotations" value="3 GO annotations based on evolutionary models"/>
</dbReference>
<dbReference type="PhylomeDB" id="Q8TF27"/>
<dbReference type="PathwayCommons" id="Q8TF27"/>
<dbReference type="SignaLink" id="Q8TF27"/>
<dbReference type="BioGRID-ORCS" id="119385">
    <property type="hits" value="13 hits in 242 CRISPR screens"/>
</dbReference>
<dbReference type="ChiTaRS" id="AGAP11">
    <property type="organism name" value="human"/>
</dbReference>
<dbReference type="GenomeRNAi" id="119385"/>
<dbReference type="Pharos" id="Q8TF27">
    <property type="development level" value="Tdark"/>
</dbReference>
<dbReference type="PRO" id="PR:Q8TF27"/>
<dbReference type="Proteomes" id="UP000005640">
    <property type="component" value="Unplaced"/>
</dbReference>
<dbReference type="RNAct" id="Q8TF27">
    <property type="molecule type" value="protein"/>
</dbReference>
<dbReference type="GO" id="GO:0005096">
    <property type="term" value="F:GTPase activator activity"/>
    <property type="evidence" value="ECO:0000318"/>
    <property type="project" value="GO_Central"/>
</dbReference>
<dbReference type="GO" id="GO:0003924">
    <property type="term" value="F:GTPase activity"/>
    <property type="evidence" value="ECO:0000318"/>
    <property type="project" value="GO_Central"/>
</dbReference>
<dbReference type="GO" id="GO:0008270">
    <property type="term" value="F:zinc ion binding"/>
    <property type="evidence" value="ECO:0007669"/>
    <property type="project" value="UniProtKB-KW"/>
</dbReference>
<dbReference type="CDD" id="cd08853">
    <property type="entry name" value="ArfGap_AGAP2"/>
    <property type="match status" value="1"/>
</dbReference>
<dbReference type="FunFam" id="1.10.220.150:FF:000001">
    <property type="entry name" value="Arf-GAP with GTPase, ANK repeat and PH domain-containing protein 1"/>
    <property type="match status" value="1"/>
</dbReference>
<dbReference type="FunFam" id="1.25.40.20:FF:000027">
    <property type="entry name" value="Arf-GAP with GTPase, ANK repeat and PH domain-containing protein 1"/>
    <property type="match status" value="1"/>
</dbReference>
<dbReference type="FunFam" id="2.30.29.30:FF:000077">
    <property type="entry name" value="Arf-GAP with GTPase, ANK repeat and PH domain-containing protein 1"/>
    <property type="match status" value="1"/>
</dbReference>
<dbReference type="FunFam" id="2.30.29.30:FF:000109">
    <property type="entry name" value="Arf-GAP with GTPase, ANK repeat and PH domain-containing protein 1"/>
    <property type="match status" value="1"/>
</dbReference>
<dbReference type="Gene3D" id="1.25.40.20">
    <property type="entry name" value="Ankyrin repeat-containing domain"/>
    <property type="match status" value="1"/>
</dbReference>
<dbReference type="Gene3D" id="1.10.220.150">
    <property type="entry name" value="Arf GTPase activating protein"/>
    <property type="match status" value="1"/>
</dbReference>
<dbReference type="Gene3D" id="2.30.29.30">
    <property type="entry name" value="Pleckstrin-homology domain (PH domain)/Phosphotyrosine-binding domain (PTB)"/>
    <property type="match status" value="2"/>
</dbReference>
<dbReference type="InterPro" id="IPR002110">
    <property type="entry name" value="Ankyrin_rpt"/>
</dbReference>
<dbReference type="InterPro" id="IPR036770">
    <property type="entry name" value="Ankyrin_rpt-contain_sf"/>
</dbReference>
<dbReference type="InterPro" id="IPR051282">
    <property type="entry name" value="Arf-GAP_GTPase_ANK_PH"/>
</dbReference>
<dbReference type="InterPro" id="IPR037278">
    <property type="entry name" value="ARFGAP/RecO"/>
</dbReference>
<dbReference type="InterPro" id="IPR001164">
    <property type="entry name" value="ArfGAP_dom"/>
</dbReference>
<dbReference type="InterPro" id="IPR038508">
    <property type="entry name" value="ArfGAP_dom_sf"/>
</dbReference>
<dbReference type="InterPro" id="IPR011993">
    <property type="entry name" value="PH-like_dom_sf"/>
</dbReference>
<dbReference type="InterPro" id="IPR001849">
    <property type="entry name" value="PH_domain"/>
</dbReference>
<dbReference type="PANTHER" id="PTHR45819:SF8">
    <property type="entry name" value="ARF-GAP WITH GTPASE, ANK REPEAT AND PH DOMAIN-CONTAINING PROTEIN 11"/>
    <property type="match status" value="1"/>
</dbReference>
<dbReference type="PANTHER" id="PTHR45819">
    <property type="entry name" value="CENTAURIN-GAMMA-1A"/>
    <property type="match status" value="1"/>
</dbReference>
<dbReference type="Pfam" id="PF12796">
    <property type="entry name" value="Ank_2"/>
    <property type="match status" value="1"/>
</dbReference>
<dbReference type="Pfam" id="PF01412">
    <property type="entry name" value="ArfGap"/>
    <property type="match status" value="1"/>
</dbReference>
<dbReference type="Pfam" id="PF00169">
    <property type="entry name" value="PH"/>
    <property type="match status" value="1"/>
</dbReference>
<dbReference type="PRINTS" id="PR00405">
    <property type="entry name" value="REVINTRACTNG"/>
</dbReference>
<dbReference type="SMART" id="SM00248">
    <property type="entry name" value="ANK"/>
    <property type="match status" value="2"/>
</dbReference>
<dbReference type="SMART" id="SM00105">
    <property type="entry name" value="ArfGap"/>
    <property type="match status" value="1"/>
</dbReference>
<dbReference type="SMART" id="SM00233">
    <property type="entry name" value="PH"/>
    <property type="match status" value="1"/>
</dbReference>
<dbReference type="SUPFAM" id="SSF48403">
    <property type="entry name" value="Ankyrin repeat"/>
    <property type="match status" value="1"/>
</dbReference>
<dbReference type="SUPFAM" id="SSF57863">
    <property type="entry name" value="ArfGap/RecO-like zinc finger"/>
    <property type="match status" value="1"/>
</dbReference>
<dbReference type="SUPFAM" id="SSF50729">
    <property type="entry name" value="PH domain-like"/>
    <property type="match status" value="1"/>
</dbReference>
<dbReference type="PROSITE" id="PS50297">
    <property type="entry name" value="ANK_REP_REGION"/>
    <property type="match status" value="1"/>
</dbReference>
<dbReference type="PROSITE" id="PS50088">
    <property type="entry name" value="ANK_REPEAT"/>
    <property type="match status" value="1"/>
</dbReference>
<dbReference type="PROSITE" id="PS50115">
    <property type="entry name" value="ARFGAP"/>
    <property type="match status" value="1"/>
</dbReference>
<dbReference type="PROSITE" id="PS50003">
    <property type="entry name" value="PH_DOMAIN"/>
    <property type="match status" value="1"/>
</dbReference>
<gene>
    <name type="primary">AGAP11</name>
    <name type="synonym">KIAA1975</name>
</gene>
<proteinExistence type="evidence at transcript level"/>
<evidence type="ECO:0000255" key="1">
    <source>
        <dbReference type="PROSITE-ProRule" id="PRU00145"/>
    </source>
</evidence>
<evidence type="ECO:0000255" key="2">
    <source>
        <dbReference type="PROSITE-ProRule" id="PRU00288"/>
    </source>
</evidence>
<evidence type="ECO:0000256" key="3">
    <source>
        <dbReference type="SAM" id="MobiDB-lite"/>
    </source>
</evidence>
<evidence type="ECO:0000269" key="4">
    <source>
    </source>
</evidence>
<evidence type="ECO:0000269" key="5">
    <source ref="2"/>
</evidence>
<evidence type="ECO:0000305" key="6"/>
<name>AGA11_HUMAN</name>
<feature type="chain" id="PRO_0000328758" description="Arf-GAP with GTPase, ANK repeat and PH domain-containing protein 11">
    <location>
        <begin position="1"/>
        <end position="550"/>
    </location>
</feature>
<feature type="domain" description="PH" evidence="1">
    <location>
        <begin position="121"/>
        <end position="307"/>
    </location>
</feature>
<feature type="domain" description="Arf-GAP" evidence="2">
    <location>
        <begin position="328"/>
        <end position="448"/>
    </location>
</feature>
<feature type="repeat" description="ANK 1">
    <location>
        <begin position="487"/>
        <end position="516"/>
    </location>
</feature>
<feature type="repeat" description="ANK 2">
    <location>
        <begin position="520"/>
        <end position="549"/>
    </location>
</feature>
<feature type="zinc finger region" description="C4-type" evidence="2">
    <location>
        <begin position="343"/>
        <end position="366"/>
    </location>
</feature>
<feature type="region of interest" description="Disordered" evidence="3">
    <location>
        <begin position="232"/>
        <end position="270"/>
    </location>
</feature>
<feature type="compositionally biased region" description="Basic residues" evidence="3">
    <location>
        <begin position="245"/>
        <end position="255"/>
    </location>
</feature>
<feature type="sequence variant" id="VAR_042518" description="In dbSNP:rs2641563." evidence="4 5">
    <original>I</original>
    <variation>V</variation>
    <location>
        <position position="82"/>
    </location>
</feature>
<sequence length="550" mass="60549">MTIISVTLEIHHHITERDADRSLTILDEQLYSFAFSTVHITKKRNGGGSLNNYSSSIPLTPSTSQEDLYFSVPPTANTPTPICKQSMGWSNLFTSEKGSDPDKGRKALESHADTIGSGRAIPIKQGMLLKRSGKWLKTWKKKYVTLCSNGVLTYYSSLGDYMKNIHKKEIDLRTSTIKVPGKWPSLATSACAPISSSKSNGLSKDMEALHMSANSDIGLGDSICFSPSISSTTSPKLNLPPSPHANKKKHLKKKSTNNLKDDGLSSTAEEEEEKFMIVSVTGQTCHFKATTYEERDAWVQAIQSQILASLQSCESSKSKSQLTSQSEAMALQSIQNMRGNSHCVDCETQNPKWASLNLGVLMCIECSGIHRSLGTRLSRVRSLELDDWPVELRKVMSSIGNDLANSIWEGSSQGQTKPSIESTREEKERWIRSKYEHKLFLAPLPCTELSLGQHLLRATADEDLRTAILLLAHGSREEVNETCGEGDGCTALHLACRKGNVVLAQLLIWYGVDVMARDAHGNTALTYARQASSQECINVLLQYGCPDECV</sequence>